<keyword id="KW-0687">Ribonucleoprotein</keyword>
<keyword id="KW-0689">Ribosomal protein</keyword>
<keyword id="KW-0694">RNA-binding</keyword>
<keyword id="KW-0699">rRNA-binding</keyword>
<proteinExistence type="inferred from homology"/>
<reference key="1">
    <citation type="submission" date="2008-12" db="EMBL/GenBank/DDBJ databases">
        <title>Complete sequence of chromosome of Methylobacterium chloromethanicum CM4.</title>
        <authorList>
            <consortium name="US DOE Joint Genome Institute"/>
            <person name="Lucas S."/>
            <person name="Copeland A."/>
            <person name="Lapidus A."/>
            <person name="Glavina del Rio T."/>
            <person name="Dalin E."/>
            <person name="Tice H."/>
            <person name="Bruce D."/>
            <person name="Goodwin L."/>
            <person name="Pitluck S."/>
            <person name="Chertkov O."/>
            <person name="Brettin T."/>
            <person name="Detter J.C."/>
            <person name="Han C."/>
            <person name="Larimer F."/>
            <person name="Land M."/>
            <person name="Hauser L."/>
            <person name="Kyrpides N."/>
            <person name="Mikhailova N."/>
            <person name="Marx C."/>
            <person name="Richardson P."/>
        </authorList>
    </citation>
    <scope>NUCLEOTIDE SEQUENCE [LARGE SCALE GENOMIC DNA]</scope>
    <source>
        <strain>CM4 / NCIMB 13688</strain>
    </source>
</reference>
<protein>
    <recommendedName>
        <fullName evidence="1">Large ribosomal subunit protein uL10</fullName>
    </recommendedName>
    <alternativeName>
        <fullName evidence="2">50S ribosomal protein L10</fullName>
    </alternativeName>
</protein>
<comment type="function">
    <text evidence="1">Forms part of the ribosomal stalk, playing a central role in the interaction of the ribosome with GTP-bound translation factors.</text>
</comment>
<comment type="subunit">
    <text evidence="1">Part of the ribosomal stalk of the 50S ribosomal subunit. The N-terminus interacts with L11 and the large rRNA to form the base of the stalk. The C-terminus forms an elongated spine to which L12 dimers bind in a sequential fashion forming a multimeric L10(L12)X complex.</text>
</comment>
<comment type="similarity">
    <text evidence="1">Belongs to the universal ribosomal protein uL10 family.</text>
</comment>
<gene>
    <name evidence="1" type="primary">rplJ</name>
    <name type="ordered locus">Mchl_4384</name>
</gene>
<evidence type="ECO:0000255" key="1">
    <source>
        <dbReference type="HAMAP-Rule" id="MF_00362"/>
    </source>
</evidence>
<evidence type="ECO:0000305" key="2"/>
<feature type="chain" id="PRO_1000195554" description="Large ribosomal subunit protein uL10">
    <location>
        <begin position="1"/>
        <end position="172"/>
    </location>
</feature>
<organism>
    <name type="scientific">Methylorubrum extorquens (strain CM4 / NCIMB 13688)</name>
    <name type="common">Methylobacterium extorquens</name>
    <dbReference type="NCBI Taxonomy" id="440085"/>
    <lineage>
        <taxon>Bacteria</taxon>
        <taxon>Pseudomonadati</taxon>
        <taxon>Pseudomonadota</taxon>
        <taxon>Alphaproteobacteria</taxon>
        <taxon>Hyphomicrobiales</taxon>
        <taxon>Methylobacteriaceae</taxon>
        <taxon>Methylorubrum</taxon>
    </lineage>
</organism>
<sequence length="172" mass="17665">MDRTAKADLVSTLNGVFNANAVVVVAHYKGLTVADMQKLRSQMKQAGATVKVAKNRLASIALDGTDVASIKPLLKGPTLLAYSSDPVAAAKVAVDFAKTNDKLVILGGAMGTTALNPDGVKALASLPSLDELRAKLVGLIQAPATKVAQVVNAPAAKLARVFGAYAKKDEAA</sequence>
<name>RL10_METC4</name>
<accession>B7KN43</accession>
<dbReference type="EMBL" id="CP001298">
    <property type="protein sequence ID" value="ACK85160.1"/>
    <property type="molecule type" value="Genomic_DNA"/>
</dbReference>
<dbReference type="RefSeq" id="WP_003597538.1">
    <property type="nucleotide sequence ID" value="NC_011757.1"/>
</dbReference>
<dbReference type="SMR" id="B7KN43"/>
<dbReference type="GeneID" id="72991733"/>
<dbReference type="KEGG" id="mch:Mchl_4384"/>
<dbReference type="HOGENOM" id="CLU_092227_0_0_5"/>
<dbReference type="Proteomes" id="UP000002385">
    <property type="component" value="Chromosome"/>
</dbReference>
<dbReference type="GO" id="GO:0015934">
    <property type="term" value="C:large ribosomal subunit"/>
    <property type="evidence" value="ECO:0007669"/>
    <property type="project" value="InterPro"/>
</dbReference>
<dbReference type="GO" id="GO:0070180">
    <property type="term" value="F:large ribosomal subunit rRNA binding"/>
    <property type="evidence" value="ECO:0007669"/>
    <property type="project" value="UniProtKB-UniRule"/>
</dbReference>
<dbReference type="GO" id="GO:0003735">
    <property type="term" value="F:structural constituent of ribosome"/>
    <property type="evidence" value="ECO:0007669"/>
    <property type="project" value="InterPro"/>
</dbReference>
<dbReference type="GO" id="GO:0006412">
    <property type="term" value="P:translation"/>
    <property type="evidence" value="ECO:0007669"/>
    <property type="project" value="UniProtKB-UniRule"/>
</dbReference>
<dbReference type="CDD" id="cd05797">
    <property type="entry name" value="Ribosomal_L10"/>
    <property type="match status" value="1"/>
</dbReference>
<dbReference type="Gene3D" id="3.30.70.1730">
    <property type="match status" value="1"/>
</dbReference>
<dbReference type="Gene3D" id="6.10.250.290">
    <property type="match status" value="1"/>
</dbReference>
<dbReference type="HAMAP" id="MF_00362">
    <property type="entry name" value="Ribosomal_uL10"/>
    <property type="match status" value="1"/>
</dbReference>
<dbReference type="InterPro" id="IPR001790">
    <property type="entry name" value="Ribosomal_uL10"/>
</dbReference>
<dbReference type="InterPro" id="IPR043141">
    <property type="entry name" value="Ribosomal_uL10-like_sf"/>
</dbReference>
<dbReference type="InterPro" id="IPR022973">
    <property type="entry name" value="Ribosomal_uL10_bac"/>
</dbReference>
<dbReference type="InterPro" id="IPR047865">
    <property type="entry name" value="Ribosomal_uL10_bac_type"/>
</dbReference>
<dbReference type="InterPro" id="IPR002363">
    <property type="entry name" value="Ribosomal_uL10_CS_bac"/>
</dbReference>
<dbReference type="NCBIfam" id="NF000955">
    <property type="entry name" value="PRK00099.1-1"/>
    <property type="match status" value="1"/>
</dbReference>
<dbReference type="PANTHER" id="PTHR11560">
    <property type="entry name" value="39S RIBOSOMAL PROTEIN L10, MITOCHONDRIAL"/>
    <property type="match status" value="1"/>
</dbReference>
<dbReference type="Pfam" id="PF00466">
    <property type="entry name" value="Ribosomal_L10"/>
    <property type="match status" value="1"/>
</dbReference>
<dbReference type="SUPFAM" id="SSF160369">
    <property type="entry name" value="Ribosomal protein L10-like"/>
    <property type="match status" value="1"/>
</dbReference>
<dbReference type="PROSITE" id="PS01109">
    <property type="entry name" value="RIBOSOMAL_L10"/>
    <property type="match status" value="1"/>
</dbReference>